<sequence>MRFDVITLFPEFLAQSAGLGVVGRAQEKGLFSLHGWNPRDYAEGNYRRVDDRPFGGGPGMVMLIEPLQACLQAIRDADPTPARVIHLSPQGAPLTQAKVRELAALPRMVLLCGRYEGIDERFLEANVDEEISLGDYVLSGGELGAAVIIDAVARLQDGALNDAESAAQDSFEGDLGLLDCPHYSQPAQHPLGDVPDVLRSGNHAAIAAWRRQQSLVRTAQRRPDLLDEQALGKADRTLLEQGRQVQKQKADP</sequence>
<organism>
    <name type="scientific">Stenotrophomonas maltophilia (strain K279a)</name>
    <dbReference type="NCBI Taxonomy" id="522373"/>
    <lineage>
        <taxon>Bacteria</taxon>
        <taxon>Pseudomonadati</taxon>
        <taxon>Pseudomonadota</taxon>
        <taxon>Gammaproteobacteria</taxon>
        <taxon>Lysobacterales</taxon>
        <taxon>Lysobacteraceae</taxon>
        <taxon>Stenotrophomonas</taxon>
        <taxon>Stenotrophomonas maltophilia group</taxon>
    </lineage>
</organism>
<dbReference type="EC" id="2.1.1.228" evidence="1"/>
<dbReference type="EMBL" id="AM743169">
    <property type="protein sequence ID" value="CAQ44921.1"/>
    <property type="molecule type" value="Genomic_DNA"/>
</dbReference>
<dbReference type="RefSeq" id="WP_012479531.1">
    <property type="nucleotide sequence ID" value="NC_010943.1"/>
</dbReference>
<dbReference type="SMR" id="B2FUB5"/>
<dbReference type="EnsemblBacteria" id="CAQ44921">
    <property type="protein sequence ID" value="CAQ44921"/>
    <property type="gene ID" value="Smlt1376"/>
</dbReference>
<dbReference type="KEGG" id="sml:Smlt1376"/>
<dbReference type="PATRIC" id="fig|522373.3.peg.1319"/>
<dbReference type="eggNOG" id="COG0336">
    <property type="taxonomic scope" value="Bacteria"/>
</dbReference>
<dbReference type="HOGENOM" id="CLU_047363_0_1_6"/>
<dbReference type="Proteomes" id="UP000008840">
    <property type="component" value="Chromosome"/>
</dbReference>
<dbReference type="GO" id="GO:0005829">
    <property type="term" value="C:cytosol"/>
    <property type="evidence" value="ECO:0007669"/>
    <property type="project" value="TreeGrafter"/>
</dbReference>
<dbReference type="GO" id="GO:0052906">
    <property type="term" value="F:tRNA (guanine(37)-N1)-methyltransferase activity"/>
    <property type="evidence" value="ECO:0007669"/>
    <property type="project" value="UniProtKB-UniRule"/>
</dbReference>
<dbReference type="GO" id="GO:0002939">
    <property type="term" value="P:tRNA N1-guanine methylation"/>
    <property type="evidence" value="ECO:0007669"/>
    <property type="project" value="TreeGrafter"/>
</dbReference>
<dbReference type="CDD" id="cd18080">
    <property type="entry name" value="TrmD-like"/>
    <property type="match status" value="1"/>
</dbReference>
<dbReference type="FunFam" id="1.10.1270.20:FF:000001">
    <property type="entry name" value="tRNA (guanine-N(1)-)-methyltransferase"/>
    <property type="match status" value="1"/>
</dbReference>
<dbReference type="FunFam" id="3.40.1280.10:FF:000001">
    <property type="entry name" value="tRNA (guanine-N(1)-)-methyltransferase"/>
    <property type="match status" value="1"/>
</dbReference>
<dbReference type="Gene3D" id="3.40.1280.10">
    <property type="match status" value="1"/>
</dbReference>
<dbReference type="Gene3D" id="1.10.1270.20">
    <property type="entry name" value="tRNA(m1g37)methyltransferase, domain 2"/>
    <property type="match status" value="1"/>
</dbReference>
<dbReference type="HAMAP" id="MF_00605">
    <property type="entry name" value="TrmD"/>
    <property type="match status" value="1"/>
</dbReference>
<dbReference type="InterPro" id="IPR029028">
    <property type="entry name" value="Alpha/beta_knot_MTases"/>
</dbReference>
<dbReference type="InterPro" id="IPR023148">
    <property type="entry name" value="tRNA_m1G_MeTrfase_C_sf"/>
</dbReference>
<dbReference type="InterPro" id="IPR002649">
    <property type="entry name" value="tRNA_m1G_MeTrfase_TrmD"/>
</dbReference>
<dbReference type="InterPro" id="IPR029026">
    <property type="entry name" value="tRNA_m1G_MTases_N"/>
</dbReference>
<dbReference type="InterPro" id="IPR016009">
    <property type="entry name" value="tRNA_MeTrfase_TRMD/TRM10"/>
</dbReference>
<dbReference type="NCBIfam" id="NF000648">
    <property type="entry name" value="PRK00026.1"/>
    <property type="match status" value="1"/>
</dbReference>
<dbReference type="NCBIfam" id="TIGR00088">
    <property type="entry name" value="trmD"/>
    <property type="match status" value="1"/>
</dbReference>
<dbReference type="PANTHER" id="PTHR46417">
    <property type="entry name" value="TRNA (GUANINE-N(1)-)-METHYLTRANSFERASE"/>
    <property type="match status" value="1"/>
</dbReference>
<dbReference type="PANTHER" id="PTHR46417:SF1">
    <property type="entry name" value="TRNA (GUANINE-N(1)-)-METHYLTRANSFERASE"/>
    <property type="match status" value="1"/>
</dbReference>
<dbReference type="Pfam" id="PF01746">
    <property type="entry name" value="tRNA_m1G_MT"/>
    <property type="match status" value="1"/>
</dbReference>
<dbReference type="PIRSF" id="PIRSF000386">
    <property type="entry name" value="tRNA_mtase"/>
    <property type="match status" value="1"/>
</dbReference>
<dbReference type="SUPFAM" id="SSF75217">
    <property type="entry name" value="alpha/beta knot"/>
    <property type="match status" value="1"/>
</dbReference>
<proteinExistence type="inferred from homology"/>
<accession>B2FUB5</accession>
<protein>
    <recommendedName>
        <fullName evidence="1">tRNA (guanine-N(1)-)-methyltransferase</fullName>
        <ecNumber evidence="1">2.1.1.228</ecNumber>
    </recommendedName>
    <alternativeName>
        <fullName evidence="1">M1G-methyltransferase</fullName>
    </alternativeName>
    <alternativeName>
        <fullName evidence="1">tRNA [GM37] methyltransferase</fullName>
    </alternativeName>
</protein>
<evidence type="ECO:0000255" key="1">
    <source>
        <dbReference type="HAMAP-Rule" id="MF_00605"/>
    </source>
</evidence>
<feature type="chain" id="PRO_1000130213" description="tRNA (guanine-N(1)-)-methyltransferase">
    <location>
        <begin position="1"/>
        <end position="252"/>
    </location>
</feature>
<feature type="binding site" evidence="1">
    <location>
        <position position="113"/>
    </location>
    <ligand>
        <name>S-adenosyl-L-methionine</name>
        <dbReference type="ChEBI" id="CHEBI:59789"/>
    </ligand>
</feature>
<feature type="binding site" evidence="1">
    <location>
        <begin position="133"/>
        <end position="138"/>
    </location>
    <ligand>
        <name>S-adenosyl-L-methionine</name>
        <dbReference type="ChEBI" id="CHEBI:59789"/>
    </ligand>
</feature>
<reference key="1">
    <citation type="journal article" date="2008" name="Genome Biol.">
        <title>The complete genome, comparative and functional analysis of Stenotrophomonas maltophilia reveals an organism heavily shielded by drug resistance determinants.</title>
        <authorList>
            <person name="Crossman L.C."/>
            <person name="Gould V.C."/>
            <person name="Dow J.M."/>
            <person name="Vernikos G.S."/>
            <person name="Okazaki A."/>
            <person name="Sebaihia M."/>
            <person name="Saunders D."/>
            <person name="Arrowsmith C."/>
            <person name="Carver T."/>
            <person name="Peters N."/>
            <person name="Adlem E."/>
            <person name="Kerhornou A."/>
            <person name="Lord A."/>
            <person name="Murphy L."/>
            <person name="Seeger K."/>
            <person name="Squares R."/>
            <person name="Rutter S."/>
            <person name="Quail M.A."/>
            <person name="Rajandream M.A."/>
            <person name="Harris D."/>
            <person name="Churcher C."/>
            <person name="Bentley S.D."/>
            <person name="Parkhill J."/>
            <person name="Thomson N.R."/>
            <person name="Avison M.B."/>
        </authorList>
    </citation>
    <scope>NUCLEOTIDE SEQUENCE [LARGE SCALE GENOMIC DNA]</scope>
    <source>
        <strain>K279a</strain>
    </source>
</reference>
<name>TRMD_STRMK</name>
<comment type="function">
    <text evidence="1">Specifically methylates guanosine-37 in various tRNAs.</text>
</comment>
<comment type="catalytic activity">
    <reaction evidence="1">
        <text>guanosine(37) in tRNA + S-adenosyl-L-methionine = N(1)-methylguanosine(37) in tRNA + S-adenosyl-L-homocysteine + H(+)</text>
        <dbReference type="Rhea" id="RHEA:36899"/>
        <dbReference type="Rhea" id="RHEA-COMP:10145"/>
        <dbReference type="Rhea" id="RHEA-COMP:10147"/>
        <dbReference type="ChEBI" id="CHEBI:15378"/>
        <dbReference type="ChEBI" id="CHEBI:57856"/>
        <dbReference type="ChEBI" id="CHEBI:59789"/>
        <dbReference type="ChEBI" id="CHEBI:73542"/>
        <dbReference type="ChEBI" id="CHEBI:74269"/>
        <dbReference type="EC" id="2.1.1.228"/>
    </reaction>
</comment>
<comment type="subunit">
    <text evidence="1">Homodimer.</text>
</comment>
<comment type="subcellular location">
    <subcellularLocation>
        <location evidence="1">Cytoplasm</location>
    </subcellularLocation>
</comment>
<comment type="similarity">
    <text evidence="1">Belongs to the RNA methyltransferase TrmD family.</text>
</comment>
<gene>
    <name evidence="1" type="primary">trmD</name>
    <name type="ordered locus">Smlt1376</name>
</gene>
<keyword id="KW-0963">Cytoplasm</keyword>
<keyword id="KW-0489">Methyltransferase</keyword>
<keyword id="KW-1185">Reference proteome</keyword>
<keyword id="KW-0949">S-adenosyl-L-methionine</keyword>
<keyword id="KW-0808">Transferase</keyword>
<keyword id="KW-0819">tRNA processing</keyword>